<keyword id="KW-0963">Cytoplasm</keyword>
<keyword id="KW-0227">DNA damage</keyword>
<keyword id="KW-0234">DNA repair</keyword>
<keyword id="KW-0235">DNA replication</keyword>
<keyword id="KW-0238">DNA-binding</keyword>
<keyword id="KW-0239">DNA-directed DNA polymerase</keyword>
<keyword id="KW-0460">Magnesium</keyword>
<keyword id="KW-0479">Metal-binding</keyword>
<keyword id="KW-0515">Mutator protein</keyword>
<keyword id="KW-0548">Nucleotidyltransferase</keyword>
<keyword id="KW-1185">Reference proteome</keyword>
<keyword id="KW-0808">Transferase</keyword>
<proteinExistence type="inferred from homology"/>
<sequence>MLIFPLINDTSRKIIHIDMDAFFASVEERDNPSLKGKPVIIGSDPRKTGGRGVVSTCNYEARKFGVHSAMSSKEAYERCPQAIFISGNYQKYRQVGMEVRDIFKKYTDLVEPMSIDEAYLDVTENKMGIKSAVKLAKMIQYDIWNDVHLTCSAGISYNKFLAKLASDFEKPKGLTLILPDQAQDFLKPLPIEKFHGVGKRSVEKLHALGVYTGEDLLSLSEISLIDMFGRFGYDLYRKARGINASPVKPDRVRKSIGSEKTYGKLLYNEADIKAEISKNVQRVVASLEKNKKVGKTIVLKVRYADFETLTKRMTLEEYTQDFQIIDQVAKAIFDTLEESVFGIRLLGVTVTTLENEHEAIYLDF</sequence>
<evidence type="ECO:0000255" key="1">
    <source>
        <dbReference type="HAMAP-Rule" id="MF_01113"/>
    </source>
</evidence>
<reference key="1">
    <citation type="journal article" date="2002" name="Proc. Natl. Acad. Sci. U.S.A.">
        <title>Complete genome sequence and comparative genomic analysis of an emerging human pathogen, serotype V Streptococcus agalactiae.</title>
        <authorList>
            <person name="Tettelin H."/>
            <person name="Masignani V."/>
            <person name="Cieslewicz M.J."/>
            <person name="Eisen J.A."/>
            <person name="Peterson S.N."/>
            <person name="Wessels M.R."/>
            <person name="Paulsen I.T."/>
            <person name="Nelson K.E."/>
            <person name="Margarit I."/>
            <person name="Read T.D."/>
            <person name="Madoff L.C."/>
            <person name="Wolf A.M."/>
            <person name="Beanan M.J."/>
            <person name="Brinkac L.M."/>
            <person name="Daugherty S.C."/>
            <person name="DeBoy R.T."/>
            <person name="Durkin A.S."/>
            <person name="Kolonay J.F."/>
            <person name="Madupu R."/>
            <person name="Lewis M.R."/>
            <person name="Radune D."/>
            <person name="Fedorova N.B."/>
            <person name="Scanlan D."/>
            <person name="Khouri H.M."/>
            <person name="Mulligan S."/>
            <person name="Carty H.A."/>
            <person name="Cline R.T."/>
            <person name="Van Aken S.E."/>
            <person name="Gill J."/>
            <person name="Scarselli M."/>
            <person name="Mora M."/>
            <person name="Iacobini E.T."/>
            <person name="Brettoni C."/>
            <person name="Galli G."/>
            <person name="Mariani M."/>
            <person name="Vegni F."/>
            <person name="Maione D."/>
            <person name="Rinaudo D."/>
            <person name="Rappuoli R."/>
            <person name="Telford J.L."/>
            <person name="Kasper D.L."/>
            <person name="Grandi G."/>
            <person name="Fraser C.M."/>
        </authorList>
    </citation>
    <scope>NUCLEOTIDE SEQUENCE [LARGE SCALE GENOMIC DNA]</scope>
    <source>
        <strain>ATCC BAA-611 / 2603 V/R</strain>
    </source>
</reference>
<accession>Q8DXW9</accession>
<name>DPO4_STRA5</name>
<comment type="function">
    <text evidence="1">Poorly processive, error-prone DNA polymerase involved in untargeted mutagenesis. Copies undamaged DNA at stalled replication forks, which arise in vivo from mismatched or misaligned primer ends. These misaligned primers can be extended by PolIV. Exhibits no 3'-5' exonuclease (proofreading) activity. May be involved in translesional synthesis, in conjunction with the beta clamp from PolIII.</text>
</comment>
<comment type="catalytic activity">
    <reaction evidence="1">
        <text>DNA(n) + a 2'-deoxyribonucleoside 5'-triphosphate = DNA(n+1) + diphosphate</text>
        <dbReference type="Rhea" id="RHEA:22508"/>
        <dbReference type="Rhea" id="RHEA-COMP:17339"/>
        <dbReference type="Rhea" id="RHEA-COMP:17340"/>
        <dbReference type="ChEBI" id="CHEBI:33019"/>
        <dbReference type="ChEBI" id="CHEBI:61560"/>
        <dbReference type="ChEBI" id="CHEBI:173112"/>
        <dbReference type="EC" id="2.7.7.7"/>
    </reaction>
</comment>
<comment type="cofactor">
    <cofactor evidence="1">
        <name>Mg(2+)</name>
        <dbReference type="ChEBI" id="CHEBI:18420"/>
    </cofactor>
    <text evidence="1">Binds 2 magnesium ions per subunit.</text>
</comment>
<comment type="subunit">
    <text evidence="1">Monomer.</text>
</comment>
<comment type="subcellular location">
    <subcellularLocation>
        <location evidence="1">Cytoplasm</location>
    </subcellularLocation>
</comment>
<comment type="similarity">
    <text evidence="1">Belongs to the DNA polymerase type-Y family.</text>
</comment>
<feature type="chain" id="PRO_1000084950" description="DNA polymerase IV">
    <location>
        <begin position="1"/>
        <end position="364"/>
    </location>
</feature>
<feature type="domain" description="UmuC" evidence="1">
    <location>
        <begin position="14"/>
        <end position="198"/>
    </location>
</feature>
<feature type="active site" evidence="1">
    <location>
        <position position="117"/>
    </location>
</feature>
<feature type="binding site" evidence="1">
    <location>
        <position position="18"/>
    </location>
    <ligand>
        <name>Mg(2+)</name>
        <dbReference type="ChEBI" id="CHEBI:18420"/>
    </ligand>
</feature>
<feature type="binding site" evidence="1">
    <location>
        <position position="116"/>
    </location>
    <ligand>
        <name>Mg(2+)</name>
        <dbReference type="ChEBI" id="CHEBI:18420"/>
    </ligand>
</feature>
<feature type="site" description="Substrate discrimination" evidence="1">
    <location>
        <position position="23"/>
    </location>
</feature>
<dbReference type="EC" id="2.7.7.7" evidence="1"/>
<dbReference type="EMBL" id="AE009948">
    <property type="protein sequence ID" value="AAN00589.1"/>
    <property type="molecule type" value="Genomic_DNA"/>
</dbReference>
<dbReference type="RefSeq" id="NP_688716.1">
    <property type="nucleotide sequence ID" value="NC_004116.1"/>
</dbReference>
<dbReference type="RefSeq" id="WP_000904560.1">
    <property type="nucleotide sequence ID" value="NC_004116.1"/>
</dbReference>
<dbReference type="SMR" id="Q8DXW9"/>
<dbReference type="STRING" id="208435.SAG1726"/>
<dbReference type="KEGG" id="sag:SAG1726"/>
<dbReference type="PATRIC" id="fig|208435.3.peg.1734"/>
<dbReference type="HOGENOM" id="CLU_012348_1_2_9"/>
<dbReference type="OrthoDB" id="9808813at2"/>
<dbReference type="Proteomes" id="UP000000821">
    <property type="component" value="Chromosome"/>
</dbReference>
<dbReference type="GO" id="GO:0005829">
    <property type="term" value="C:cytosol"/>
    <property type="evidence" value="ECO:0007669"/>
    <property type="project" value="TreeGrafter"/>
</dbReference>
<dbReference type="GO" id="GO:0003684">
    <property type="term" value="F:damaged DNA binding"/>
    <property type="evidence" value="ECO:0007669"/>
    <property type="project" value="InterPro"/>
</dbReference>
<dbReference type="GO" id="GO:0003887">
    <property type="term" value="F:DNA-directed DNA polymerase activity"/>
    <property type="evidence" value="ECO:0007669"/>
    <property type="project" value="UniProtKB-UniRule"/>
</dbReference>
<dbReference type="GO" id="GO:0000287">
    <property type="term" value="F:magnesium ion binding"/>
    <property type="evidence" value="ECO:0007669"/>
    <property type="project" value="UniProtKB-UniRule"/>
</dbReference>
<dbReference type="GO" id="GO:0006261">
    <property type="term" value="P:DNA-templated DNA replication"/>
    <property type="evidence" value="ECO:0007669"/>
    <property type="project" value="UniProtKB-UniRule"/>
</dbReference>
<dbReference type="GO" id="GO:0042276">
    <property type="term" value="P:error-prone translesion synthesis"/>
    <property type="evidence" value="ECO:0007669"/>
    <property type="project" value="TreeGrafter"/>
</dbReference>
<dbReference type="GO" id="GO:0009432">
    <property type="term" value="P:SOS response"/>
    <property type="evidence" value="ECO:0007669"/>
    <property type="project" value="TreeGrafter"/>
</dbReference>
<dbReference type="CDD" id="cd03586">
    <property type="entry name" value="PolY_Pol_IV_kappa"/>
    <property type="match status" value="1"/>
</dbReference>
<dbReference type="FunFam" id="3.30.1490.100:FF:000004">
    <property type="entry name" value="DNA polymerase IV"/>
    <property type="match status" value="1"/>
</dbReference>
<dbReference type="FunFam" id="3.40.1170.60:FF:000001">
    <property type="entry name" value="DNA polymerase IV"/>
    <property type="match status" value="1"/>
</dbReference>
<dbReference type="Gene3D" id="3.30.70.270">
    <property type="match status" value="1"/>
</dbReference>
<dbReference type="Gene3D" id="3.40.1170.60">
    <property type="match status" value="1"/>
</dbReference>
<dbReference type="Gene3D" id="1.10.150.20">
    <property type="entry name" value="5' to 3' exonuclease, C-terminal subdomain"/>
    <property type="match status" value="1"/>
</dbReference>
<dbReference type="Gene3D" id="3.30.1490.100">
    <property type="entry name" value="DNA polymerase, Y-family, little finger domain"/>
    <property type="match status" value="1"/>
</dbReference>
<dbReference type="HAMAP" id="MF_01113">
    <property type="entry name" value="DNApol_IV"/>
    <property type="match status" value="1"/>
</dbReference>
<dbReference type="InterPro" id="IPR043502">
    <property type="entry name" value="DNA/RNA_pol_sf"/>
</dbReference>
<dbReference type="InterPro" id="IPR036775">
    <property type="entry name" value="DNA_pol_Y-fam_lit_finger_sf"/>
</dbReference>
<dbReference type="InterPro" id="IPR017961">
    <property type="entry name" value="DNA_pol_Y-fam_little_finger"/>
</dbReference>
<dbReference type="InterPro" id="IPR050116">
    <property type="entry name" value="DNA_polymerase-Y"/>
</dbReference>
<dbReference type="InterPro" id="IPR022880">
    <property type="entry name" value="DNApol_IV"/>
</dbReference>
<dbReference type="InterPro" id="IPR024728">
    <property type="entry name" value="PolY_HhH_motif"/>
</dbReference>
<dbReference type="InterPro" id="IPR043128">
    <property type="entry name" value="Rev_trsase/Diguanyl_cyclase"/>
</dbReference>
<dbReference type="InterPro" id="IPR001126">
    <property type="entry name" value="UmuC"/>
</dbReference>
<dbReference type="NCBIfam" id="NF002677">
    <property type="entry name" value="PRK02406.1"/>
    <property type="match status" value="1"/>
</dbReference>
<dbReference type="NCBIfam" id="NF010731">
    <property type="entry name" value="PRK14133.1"/>
    <property type="match status" value="1"/>
</dbReference>
<dbReference type="PANTHER" id="PTHR11076:SF33">
    <property type="entry name" value="DNA POLYMERASE KAPPA"/>
    <property type="match status" value="1"/>
</dbReference>
<dbReference type="PANTHER" id="PTHR11076">
    <property type="entry name" value="DNA REPAIR POLYMERASE UMUC / TRANSFERASE FAMILY MEMBER"/>
    <property type="match status" value="1"/>
</dbReference>
<dbReference type="Pfam" id="PF00817">
    <property type="entry name" value="IMS"/>
    <property type="match status" value="1"/>
</dbReference>
<dbReference type="Pfam" id="PF11799">
    <property type="entry name" value="IMS_C"/>
    <property type="match status" value="1"/>
</dbReference>
<dbReference type="Pfam" id="PF11798">
    <property type="entry name" value="IMS_HHH"/>
    <property type="match status" value="1"/>
</dbReference>
<dbReference type="SUPFAM" id="SSF56672">
    <property type="entry name" value="DNA/RNA polymerases"/>
    <property type="match status" value="1"/>
</dbReference>
<dbReference type="SUPFAM" id="SSF100879">
    <property type="entry name" value="Lesion bypass DNA polymerase (Y-family), little finger domain"/>
    <property type="match status" value="1"/>
</dbReference>
<dbReference type="PROSITE" id="PS50173">
    <property type="entry name" value="UMUC"/>
    <property type="match status" value="1"/>
</dbReference>
<gene>
    <name evidence="1" type="primary">dinB</name>
    <name type="ordered locus">SAG1726</name>
</gene>
<protein>
    <recommendedName>
        <fullName evidence="1">DNA polymerase IV</fullName>
        <shortName evidence="1">Pol IV</shortName>
        <ecNumber evidence="1">2.7.7.7</ecNumber>
    </recommendedName>
</protein>
<organism>
    <name type="scientific">Streptococcus agalactiae serotype V (strain ATCC BAA-611 / 2603 V/R)</name>
    <dbReference type="NCBI Taxonomy" id="208435"/>
    <lineage>
        <taxon>Bacteria</taxon>
        <taxon>Bacillati</taxon>
        <taxon>Bacillota</taxon>
        <taxon>Bacilli</taxon>
        <taxon>Lactobacillales</taxon>
        <taxon>Streptococcaceae</taxon>
        <taxon>Streptococcus</taxon>
    </lineage>
</organism>